<accession>A9KEL6</accession>
<dbReference type="EC" id="2.7.1.170" evidence="1"/>
<dbReference type="EMBL" id="CP000733">
    <property type="protein sequence ID" value="ABS78006.1"/>
    <property type="molecule type" value="Genomic_DNA"/>
</dbReference>
<dbReference type="RefSeq" id="WP_005770633.1">
    <property type="nucleotide sequence ID" value="NC_009727.1"/>
</dbReference>
<dbReference type="SMR" id="A9KEL6"/>
<dbReference type="KEGG" id="cbd:CBUD_1921"/>
<dbReference type="HOGENOM" id="CLU_038782_0_0_6"/>
<dbReference type="UniPathway" id="UPA00343"/>
<dbReference type="UniPathway" id="UPA00544"/>
<dbReference type="Proteomes" id="UP000008555">
    <property type="component" value="Chromosome"/>
</dbReference>
<dbReference type="GO" id="GO:0005524">
    <property type="term" value="F:ATP binding"/>
    <property type="evidence" value="ECO:0007669"/>
    <property type="project" value="UniProtKB-UniRule"/>
</dbReference>
<dbReference type="GO" id="GO:0016301">
    <property type="term" value="F:kinase activity"/>
    <property type="evidence" value="ECO:0007669"/>
    <property type="project" value="UniProtKB-KW"/>
</dbReference>
<dbReference type="GO" id="GO:0016773">
    <property type="term" value="F:phosphotransferase activity, alcohol group as acceptor"/>
    <property type="evidence" value="ECO:0007669"/>
    <property type="project" value="UniProtKB-UniRule"/>
</dbReference>
<dbReference type="GO" id="GO:0097175">
    <property type="term" value="P:1,6-anhydro-N-acetyl-beta-muramic acid catabolic process"/>
    <property type="evidence" value="ECO:0007669"/>
    <property type="project" value="UniProtKB-UniRule"/>
</dbReference>
<dbReference type="GO" id="GO:0006040">
    <property type="term" value="P:amino sugar metabolic process"/>
    <property type="evidence" value="ECO:0007669"/>
    <property type="project" value="InterPro"/>
</dbReference>
<dbReference type="GO" id="GO:0009254">
    <property type="term" value="P:peptidoglycan turnover"/>
    <property type="evidence" value="ECO:0007669"/>
    <property type="project" value="UniProtKB-UniRule"/>
</dbReference>
<dbReference type="CDD" id="cd24050">
    <property type="entry name" value="ASKHA_NBD_ANMK"/>
    <property type="match status" value="1"/>
</dbReference>
<dbReference type="Gene3D" id="3.30.420.40">
    <property type="match status" value="2"/>
</dbReference>
<dbReference type="HAMAP" id="MF_01270">
    <property type="entry name" value="AnhMurNAc_kinase"/>
    <property type="match status" value="1"/>
</dbReference>
<dbReference type="InterPro" id="IPR005338">
    <property type="entry name" value="Anhydro_N_Ac-Mur_kinase"/>
</dbReference>
<dbReference type="InterPro" id="IPR043129">
    <property type="entry name" value="ATPase_NBD"/>
</dbReference>
<dbReference type="NCBIfam" id="NF007139">
    <property type="entry name" value="PRK09585.1-3"/>
    <property type="match status" value="1"/>
</dbReference>
<dbReference type="NCBIfam" id="NF007148">
    <property type="entry name" value="PRK09585.3-2"/>
    <property type="match status" value="1"/>
</dbReference>
<dbReference type="PANTHER" id="PTHR30605">
    <property type="entry name" value="ANHYDRO-N-ACETYLMURAMIC ACID KINASE"/>
    <property type="match status" value="1"/>
</dbReference>
<dbReference type="PANTHER" id="PTHR30605:SF0">
    <property type="entry name" value="ANHYDRO-N-ACETYLMURAMIC ACID KINASE"/>
    <property type="match status" value="1"/>
</dbReference>
<dbReference type="Pfam" id="PF03702">
    <property type="entry name" value="AnmK"/>
    <property type="match status" value="1"/>
</dbReference>
<dbReference type="SUPFAM" id="SSF53067">
    <property type="entry name" value="Actin-like ATPase domain"/>
    <property type="match status" value="1"/>
</dbReference>
<proteinExistence type="inferred from homology"/>
<protein>
    <recommendedName>
        <fullName evidence="1">Anhydro-N-acetylmuramic acid kinase</fullName>
        <ecNumber evidence="1">2.7.1.170</ecNumber>
    </recommendedName>
    <alternativeName>
        <fullName evidence="1">AnhMurNAc kinase</fullName>
    </alternativeName>
</protein>
<comment type="function">
    <text evidence="1">Catalyzes the specific phosphorylation of 1,6-anhydro-N-acetylmuramic acid (anhMurNAc) with the simultaneous cleavage of the 1,6-anhydro ring, generating MurNAc-6-P. Is required for the utilization of anhMurNAc either imported from the medium or derived from its own cell wall murein, and thus plays a role in cell wall recycling.</text>
</comment>
<comment type="catalytic activity">
    <reaction evidence="1">
        <text>1,6-anhydro-N-acetyl-beta-muramate + ATP + H2O = N-acetyl-D-muramate 6-phosphate + ADP + H(+)</text>
        <dbReference type="Rhea" id="RHEA:24952"/>
        <dbReference type="ChEBI" id="CHEBI:15377"/>
        <dbReference type="ChEBI" id="CHEBI:15378"/>
        <dbReference type="ChEBI" id="CHEBI:30616"/>
        <dbReference type="ChEBI" id="CHEBI:58690"/>
        <dbReference type="ChEBI" id="CHEBI:58722"/>
        <dbReference type="ChEBI" id="CHEBI:456216"/>
        <dbReference type="EC" id="2.7.1.170"/>
    </reaction>
</comment>
<comment type="pathway">
    <text evidence="1">Amino-sugar metabolism; 1,6-anhydro-N-acetylmuramate degradation.</text>
</comment>
<comment type="pathway">
    <text evidence="1">Cell wall biogenesis; peptidoglycan recycling.</text>
</comment>
<comment type="similarity">
    <text evidence="1">Belongs to the anhydro-N-acetylmuramic acid kinase family.</text>
</comment>
<keyword id="KW-0067">ATP-binding</keyword>
<keyword id="KW-0119">Carbohydrate metabolism</keyword>
<keyword id="KW-0418">Kinase</keyword>
<keyword id="KW-0547">Nucleotide-binding</keyword>
<keyword id="KW-0808">Transferase</keyword>
<sequence>MPKERYIGLISGTSMDALDTALVQFDPLKIIATHGEPIPTELKKNLVALSTGTDNSIPSMGETDVALGRLFGEAVLTLLEKAKVSSDSIQAIGSHGQTIRHMPNGKHPFTLQIGDPNTIAALTGITTVADFRRRDMALGGQGAPLAPAFHEFLLRDQSENRLILNIGGIANLTFLPRDPEKSTIGFDTGPGNTLLDAWCLMNLNKDYDDQGQWAASGRVQEKLVAQLLAEPYFQTPPPKSTGREYFNLNWLKKNLNGEKFDPVDIQATLVELTARSVANCCRNFSMDSGSLWLCGGGARNHHLVNRLKVLCKPLRVTTTEEIGIHPDWLEAVCFAWLAKQTLEKKPGNLPSVTGAKKSAILGAIYWGEKFNY</sequence>
<gene>
    <name evidence="1" type="primary">anmK</name>
    <name type="ordered locus">CBUD_1921</name>
</gene>
<organism>
    <name type="scientific">Coxiella burnetii (strain Dugway 5J108-111)</name>
    <dbReference type="NCBI Taxonomy" id="434922"/>
    <lineage>
        <taxon>Bacteria</taxon>
        <taxon>Pseudomonadati</taxon>
        <taxon>Pseudomonadota</taxon>
        <taxon>Gammaproteobacteria</taxon>
        <taxon>Legionellales</taxon>
        <taxon>Coxiellaceae</taxon>
        <taxon>Coxiella</taxon>
    </lineage>
</organism>
<evidence type="ECO:0000255" key="1">
    <source>
        <dbReference type="HAMAP-Rule" id="MF_01270"/>
    </source>
</evidence>
<reference key="1">
    <citation type="journal article" date="2009" name="Infect. Immun.">
        <title>Comparative genomics reveal extensive transposon-mediated genomic plasticity and diversity among potential effector proteins within the genus Coxiella.</title>
        <authorList>
            <person name="Beare P.A."/>
            <person name="Unsworth N."/>
            <person name="Andoh M."/>
            <person name="Voth D.E."/>
            <person name="Omsland A."/>
            <person name="Gilk S.D."/>
            <person name="Williams K.P."/>
            <person name="Sobral B.W."/>
            <person name="Kupko J.J. III"/>
            <person name="Porcella S.F."/>
            <person name="Samuel J.E."/>
            <person name="Heinzen R.A."/>
        </authorList>
    </citation>
    <scope>NUCLEOTIDE SEQUENCE [LARGE SCALE GENOMIC DNA]</scope>
    <source>
        <strain>Dugway 5J108-111</strain>
    </source>
</reference>
<feature type="chain" id="PRO_1000085832" description="Anhydro-N-acetylmuramic acid kinase">
    <location>
        <begin position="1"/>
        <end position="372"/>
    </location>
</feature>
<feature type="binding site" evidence="1">
    <location>
        <begin position="12"/>
        <end position="19"/>
    </location>
    <ligand>
        <name>ATP</name>
        <dbReference type="ChEBI" id="CHEBI:30616"/>
    </ligand>
</feature>
<name>ANMK_COXBN</name>